<feature type="chain" id="PRO_1000145425" description="Peptide methionine sulfoxide reductase MsrA">
    <location>
        <begin position="1"/>
        <end position="215"/>
    </location>
</feature>
<feature type="active site" evidence="1">
    <location>
        <position position="58"/>
    </location>
</feature>
<proteinExistence type="inferred from homology"/>
<comment type="function">
    <text evidence="1">Has an important function as a repair enzyme for proteins that have been inactivated by oxidation. Catalyzes the reversible oxidation-reduction of methionine sulfoxide in proteins to methionine.</text>
</comment>
<comment type="catalytic activity">
    <reaction evidence="1">
        <text>L-methionyl-[protein] + [thioredoxin]-disulfide + H2O = L-methionyl-(S)-S-oxide-[protein] + [thioredoxin]-dithiol</text>
        <dbReference type="Rhea" id="RHEA:14217"/>
        <dbReference type="Rhea" id="RHEA-COMP:10698"/>
        <dbReference type="Rhea" id="RHEA-COMP:10700"/>
        <dbReference type="Rhea" id="RHEA-COMP:12313"/>
        <dbReference type="Rhea" id="RHEA-COMP:12315"/>
        <dbReference type="ChEBI" id="CHEBI:15377"/>
        <dbReference type="ChEBI" id="CHEBI:16044"/>
        <dbReference type="ChEBI" id="CHEBI:29950"/>
        <dbReference type="ChEBI" id="CHEBI:44120"/>
        <dbReference type="ChEBI" id="CHEBI:50058"/>
        <dbReference type="EC" id="1.8.4.11"/>
    </reaction>
</comment>
<comment type="catalytic activity">
    <reaction evidence="1">
        <text>[thioredoxin]-disulfide + L-methionine + H2O = L-methionine (S)-S-oxide + [thioredoxin]-dithiol</text>
        <dbReference type="Rhea" id="RHEA:19993"/>
        <dbReference type="Rhea" id="RHEA-COMP:10698"/>
        <dbReference type="Rhea" id="RHEA-COMP:10700"/>
        <dbReference type="ChEBI" id="CHEBI:15377"/>
        <dbReference type="ChEBI" id="CHEBI:29950"/>
        <dbReference type="ChEBI" id="CHEBI:50058"/>
        <dbReference type="ChEBI" id="CHEBI:57844"/>
        <dbReference type="ChEBI" id="CHEBI:58772"/>
        <dbReference type="EC" id="1.8.4.11"/>
    </reaction>
</comment>
<comment type="similarity">
    <text evidence="1">Belongs to the MsrA Met sulfoxide reductase family.</text>
</comment>
<sequence length="215" mass="23500">MVLRSEILTKKSELPTPDQALPGRESAMPVPEAHFVNGRPLTAPFPAGLQQVLFGMGCFWGAERRLWQQPGVWVTAVGYAGGYTPNPTYDEVCSGLTGHSEVVLVVYNPQETSFEQLLKVFWEAHDPTQGMRQGGDIGTQYRSVIYTFDAAQKAAALASRESFQAELAKAGYDRITTEIADVPPFYYAEAYHQQYLAKNPNGYCGLGGTGVCLPA</sequence>
<keyword id="KW-0560">Oxidoreductase</keyword>
<dbReference type="EC" id="1.8.4.11" evidence="1"/>
<dbReference type="EMBL" id="FM209186">
    <property type="protein sequence ID" value="CAW30162.1"/>
    <property type="molecule type" value="Genomic_DNA"/>
</dbReference>
<dbReference type="RefSeq" id="WP_003116145.1">
    <property type="nucleotide sequence ID" value="NC_011770.1"/>
</dbReference>
<dbReference type="SMR" id="B7V3B1"/>
<dbReference type="KEGG" id="pag:PLES_54081"/>
<dbReference type="HOGENOM" id="CLU_031040_10_3_6"/>
<dbReference type="GO" id="GO:0005737">
    <property type="term" value="C:cytoplasm"/>
    <property type="evidence" value="ECO:0007669"/>
    <property type="project" value="TreeGrafter"/>
</dbReference>
<dbReference type="GO" id="GO:0036456">
    <property type="term" value="F:L-methionine-(S)-S-oxide reductase activity"/>
    <property type="evidence" value="ECO:0007669"/>
    <property type="project" value="TreeGrafter"/>
</dbReference>
<dbReference type="GO" id="GO:0008113">
    <property type="term" value="F:peptide-methionine (S)-S-oxide reductase activity"/>
    <property type="evidence" value="ECO:0007669"/>
    <property type="project" value="UniProtKB-UniRule"/>
</dbReference>
<dbReference type="GO" id="GO:0034599">
    <property type="term" value="P:cellular response to oxidative stress"/>
    <property type="evidence" value="ECO:0007669"/>
    <property type="project" value="TreeGrafter"/>
</dbReference>
<dbReference type="GO" id="GO:0036211">
    <property type="term" value="P:protein modification process"/>
    <property type="evidence" value="ECO:0007669"/>
    <property type="project" value="UniProtKB-UniRule"/>
</dbReference>
<dbReference type="FunFam" id="3.30.1060.10:FF:000001">
    <property type="entry name" value="Peptide methionine sulfoxide reductase MsrA"/>
    <property type="match status" value="1"/>
</dbReference>
<dbReference type="Gene3D" id="3.30.1060.10">
    <property type="entry name" value="Peptide methionine sulphoxide reductase MsrA"/>
    <property type="match status" value="1"/>
</dbReference>
<dbReference type="HAMAP" id="MF_01401">
    <property type="entry name" value="MsrA"/>
    <property type="match status" value="1"/>
</dbReference>
<dbReference type="InterPro" id="IPR002569">
    <property type="entry name" value="Met_Sox_Rdtase_MsrA_dom"/>
</dbReference>
<dbReference type="InterPro" id="IPR036509">
    <property type="entry name" value="Met_Sox_Rdtase_MsrA_sf"/>
</dbReference>
<dbReference type="InterPro" id="IPR050162">
    <property type="entry name" value="MsrA_MetSO_reductase"/>
</dbReference>
<dbReference type="NCBIfam" id="TIGR00401">
    <property type="entry name" value="msrA"/>
    <property type="match status" value="1"/>
</dbReference>
<dbReference type="PANTHER" id="PTHR42799">
    <property type="entry name" value="MITOCHONDRIAL PEPTIDE METHIONINE SULFOXIDE REDUCTASE"/>
    <property type="match status" value="1"/>
</dbReference>
<dbReference type="PANTHER" id="PTHR42799:SF2">
    <property type="entry name" value="MITOCHONDRIAL PEPTIDE METHIONINE SULFOXIDE REDUCTASE"/>
    <property type="match status" value="1"/>
</dbReference>
<dbReference type="Pfam" id="PF01625">
    <property type="entry name" value="PMSR"/>
    <property type="match status" value="1"/>
</dbReference>
<dbReference type="SUPFAM" id="SSF55068">
    <property type="entry name" value="Peptide methionine sulfoxide reductase"/>
    <property type="match status" value="1"/>
</dbReference>
<reference key="1">
    <citation type="journal article" date="2009" name="Genome Res.">
        <title>Newly introduced genomic prophage islands are critical determinants of in vivo competitiveness in the Liverpool epidemic strain of Pseudomonas aeruginosa.</title>
        <authorList>
            <person name="Winstanley C."/>
            <person name="Langille M.G.I."/>
            <person name="Fothergill J.L."/>
            <person name="Kukavica-Ibrulj I."/>
            <person name="Paradis-Bleau C."/>
            <person name="Sanschagrin F."/>
            <person name="Thomson N.R."/>
            <person name="Winsor G.L."/>
            <person name="Quail M.A."/>
            <person name="Lennard N."/>
            <person name="Bignell A."/>
            <person name="Clarke L."/>
            <person name="Seeger K."/>
            <person name="Saunders D."/>
            <person name="Harris D."/>
            <person name="Parkhill J."/>
            <person name="Hancock R.E.W."/>
            <person name="Brinkman F.S.L."/>
            <person name="Levesque R.C."/>
        </authorList>
    </citation>
    <scope>NUCLEOTIDE SEQUENCE [LARGE SCALE GENOMIC DNA]</scope>
    <source>
        <strain>LESB58</strain>
    </source>
</reference>
<accession>B7V3B1</accession>
<name>MSRA_PSEA8</name>
<gene>
    <name evidence="1" type="primary">msrA</name>
    <name type="ordered locus">PLES_54081</name>
</gene>
<organism>
    <name type="scientific">Pseudomonas aeruginosa (strain LESB58)</name>
    <dbReference type="NCBI Taxonomy" id="557722"/>
    <lineage>
        <taxon>Bacteria</taxon>
        <taxon>Pseudomonadati</taxon>
        <taxon>Pseudomonadota</taxon>
        <taxon>Gammaproteobacteria</taxon>
        <taxon>Pseudomonadales</taxon>
        <taxon>Pseudomonadaceae</taxon>
        <taxon>Pseudomonas</taxon>
    </lineage>
</organism>
<protein>
    <recommendedName>
        <fullName evidence="1">Peptide methionine sulfoxide reductase MsrA</fullName>
        <shortName evidence="1">Protein-methionine-S-oxide reductase</shortName>
        <ecNumber evidence="1">1.8.4.11</ecNumber>
    </recommendedName>
    <alternativeName>
        <fullName evidence="1">Peptide-methionine (S)-S-oxide reductase</fullName>
        <shortName evidence="1">Peptide Met(O) reductase</shortName>
    </alternativeName>
</protein>
<evidence type="ECO:0000255" key="1">
    <source>
        <dbReference type="HAMAP-Rule" id="MF_01401"/>
    </source>
</evidence>